<sequence length="232" mass="26041">MDFESQLCIKVVLLLLPFFIIGIRLLWVLPAVNSPAMGSEKEKGLSQIPSELRGSNIMIFLGSGGHTGEMMRILANVDLNNFNRTWVTSSGDSTSILKCKKYEDERLTSGQNKSDYLVLHRARTVGESIISSVFSTVRSLISTIKHLYELPQFPSILLLNGPGTSVPLAYIIFLLKFLGLCKTRIIYIESLARVKQLSVSGLLILPITDRFIVQWKQLAVKYKRAEYYGILI</sequence>
<feature type="chain" id="PRO_0000123814" description="UDP-N-acetylglucosamine transferase subunit ALG14">
    <location>
        <begin position="1"/>
        <end position="232"/>
    </location>
</feature>
<feature type="topological domain" description="Lumenal" evidence="2">
    <location>
        <begin position="1"/>
        <end position="10"/>
    </location>
</feature>
<feature type="transmembrane region" description="Helical" evidence="3">
    <location>
        <begin position="11"/>
        <end position="31"/>
    </location>
</feature>
<feature type="topological domain" description="Cytoplasmic" evidence="2">
    <location>
        <begin position="32"/>
        <end position="232"/>
    </location>
</feature>
<accession>Q6BMD0</accession>
<comment type="function">
    <text evidence="1">Involved in protein N-glycosylation. Essential for the second step of the dolichol-linked oligosaccharide pathway. Anchors the catalytic subunit ALG13 to the ER (By similarity).</text>
</comment>
<comment type="subunit">
    <text evidence="1">Heterodimer with ALG13 to form a functional enzyme.</text>
</comment>
<comment type="subcellular location">
    <subcellularLocation>
        <location evidence="2">Endoplasmic reticulum membrane</location>
        <topology evidence="3">Single-pass membrane protein</topology>
    </subcellularLocation>
    <subcellularLocation>
        <location evidence="2">Nucleus membrane</location>
        <topology evidence="3">Single-pass membrane protein</topology>
    </subcellularLocation>
</comment>
<comment type="similarity">
    <text evidence="4">Belongs to the ALG14 family.</text>
</comment>
<protein>
    <recommendedName>
        <fullName>UDP-N-acetylglucosamine transferase subunit ALG14</fullName>
    </recommendedName>
    <alternativeName>
        <fullName>Asparagine-linked glycosylation protein 14</fullName>
    </alternativeName>
</protein>
<evidence type="ECO:0000250" key="1"/>
<evidence type="ECO:0000250" key="2">
    <source>
        <dbReference type="UniProtKB" id="P38242"/>
    </source>
</evidence>
<evidence type="ECO:0000255" key="3"/>
<evidence type="ECO:0000305" key="4"/>
<name>ALG14_DEBHA</name>
<organism>
    <name type="scientific">Debaryomyces hansenii (strain ATCC 36239 / CBS 767 / BCRC 21394 / JCM 1990 / NBRC 0083 / IGC 2968)</name>
    <name type="common">Yeast</name>
    <name type="synonym">Torulaspora hansenii</name>
    <dbReference type="NCBI Taxonomy" id="284592"/>
    <lineage>
        <taxon>Eukaryota</taxon>
        <taxon>Fungi</taxon>
        <taxon>Dikarya</taxon>
        <taxon>Ascomycota</taxon>
        <taxon>Saccharomycotina</taxon>
        <taxon>Pichiomycetes</taxon>
        <taxon>Debaryomycetaceae</taxon>
        <taxon>Debaryomyces</taxon>
    </lineage>
</organism>
<dbReference type="EMBL" id="CR382138">
    <property type="protein sequence ID" value="CAG88973.2"/>
    <property type="molecule type" value="Genomic_DNA"/>
</dbReference>
<dbReference type="RefSeq" id="XP_460641.2">
    <property type="nucleotide sequence ID" value="XM_460641.1"/>
</dbReference>
<dbReference type="SMR" id="Q6BMD0"/>
<dbReference type="FunCoup" id="Q6BMD0">
    <property type="interactions" value="321"/>
</dbReference>
<dbReference type="STRING" id="284592.Q6BMD0"/>
<dbReference type="CAZy" id="GT1">
    <property type="family name" value="Glycosyltransferase Family 1"/>
</dbReference>
<dbReference type="GeneID" id="2903152"/>
<dbReference type="KEGG" id="dha:DEHA2F06512g"/>
<dbReference type="VEuPathDB" id="FungiDB:DEHA2F06512g"/>
<dbReference type="eggNOG" id="KOG3339">
    <property type="taxonomic scope" value="Eukaryota"/>
</dbReference>
<dbReference type="HOGENOM" id="CLU_064541_2_0_1"/>
<dbReference type="InParanoid" id="Q6BMD0"/>
<dbReference type="OMA" id="CRIVFIE"/>
<dbReference type="OrthoDB" id="17098at2759"/>
<dbReference type="Proteomes" id="UP000000599">
    <property type="component" value="Chromosome F"/>
</dbReference>
<dbReference type="GO" id="GO:0031965">
    <property type="term" value="C:nuclear membrane"/>
    <property type="evidence" value="ECO:0007669"/>
    <property type="project" value="UniProtKB-SubCell"/>
</dbReference>
<dbReference type="GO" id="GO:0043541">
    <property type="term" value="C:UDP-N-acetylglucosamine transferase complex"/>
    <property type="evidence" value="ECO:0007669"/>
    <property type="project" value="TreeGrafter"/>
</dbReference>
<dbReference type="GO" id="GO:0004577">
    <property type="term" value="F:N-acetylglucosaminyldiphosphodolichol N-acetylglucosaminyltransferase activity"/>
    <property type="evidence" value="ECO:0007669"/>
    <property type="project" value="TreeGrafter"/>
</dbReference>
<dbReference type="GO" id="GO:0006488">
    <property type="term" value="P:dolichol-linked oligosaccharide biosynthetic process"/>
    <property type="evidence" value="ECO:0007669"/>
    <property type="project" value="InterPro"/>
</dbReference>
<dbReference type="Gene3D" id="3.40.50.2000">
    <property type="entry name" value="Glycogen Phosphorylase B"/>
    <property type="match status" value="1"/>
</dbReference>
<dbReference type="InterPro" id="IPR013969">
    <property type="entry name" value="Oligosacch_biosynth_Alg14"/>
</dbReference>
<dbReference type="PANTHER" id="PTHR12154">
    <property type="entry name" value="GLYCOSYL TRANSFERASE-RELATED"/>
    <property type="match status" value="1"/>
</dbReference>
<dbReference type="PANTHER" id="PTHR12154:SF4">
    <property type="entry name" value="UDP-N-ACETYLGLUCOSAMINE TRANSFERASE SUBUNIT ALG14 HOMOLOG"/>
    <property type="match status" value="1"/>
</dbReference>
<dbReference type="Pfam" id="PF08660">
    <property type="entry name" value="Alg14"/>
    <property type="match status" value="1"/>
</dbReference>
<keyword id="KW-0256">Endoplasmic reticulum</keyword>
<keyword id="KW-0472">Membrane</keyword>
<keyword id="KW-0539">Nucleus</keyword>
<keyword id="KW-1185">Reference proteome</keyword>
<keyword id="KW-0812">Transmembrane</keyword>
<keyword id="KW-1133">Transmembrane helix</keyword>
<proteinExistence type="inferred from homology"/>
<reference key="1">
    <citation type="journal article" date="2004" name="Nature">
        <title>Genome evolution in yeasts.</title>
        <authorList>
            <person name="Dujon B."/>
            <person name="Sherman D."/>
            <person name="Fischer G."/>
            <person name="Durrens P."/>
            <person name="Casaregola S."/>
            <person name="Lafontaine I."/>
            <person name="de Montigny J."/>
            <person name="Marck C."/>
            <person name="Neuveglise C."/>
            <person name="Talla E."/>
            <person name="Goffard N."/>
            <person name="Frangeul L."/>
            <person name="Aigle M."/>
            <person name="Anthouard V."/>
            <person name="Babour A."/>
            <person name="Barbe V."/>
            <person name="Barnay S."/>
            <person name="Blanchin S."/>
            <person name="Beckerich J.-M."/>
            <person name="Beyne E."/>
            <person name="Bleykasten C."/>
            <person name="Boisrame A."/>
            <person name="Boyer J."/>
            <person name="Cattolico L."/>
            <person name="Confanioleri F."/>
            <person name="de Daruvar A."/>
            <person name="Despons L."/>
            <person name="Fabre E."/>
            <person name="Fairhead C."/>
            <person name="Ferry-Dumazet H."/>
            <person name="Groppi A."/>
            <person name="Hantraye F."/>
            <person name="Hennequin C."/>
            <person name="Jauniaux N."/>
            <person name="Joyet P."/>
            <person name="Kachouri R."/>
            <person name="Kerrest A."/>
            <person name="Koszul R."/>
            <person name="Lemaire M."/>
            <person name="Lesur I."/>
            <person name="Ma L."/>
            <person name="Muller H."/>
            <person name="Nicaud J.-M."/>
            <person name="Nikolski M."/>
            <person name="Oztas S."/>
            <person name="Ozier-Kalogeropoulos O."/>
            <person name="Pellenz S."/>
            <person name="Potier S."/>
            <person name="Richard G.-F."/>
            <person name="Straub M.-L."/>
            <person name="Suleau A."/>
            <person name="Swennen D."/>
            <person name="Tekaia F."/>
            <person name="Wesolowski-Louvel M."/>
            <person name="Westhof E."/>
            <person name="Wirth B."/>
            <person name="Zeniou-Meyer M."/>
            <person name="Zivanovic Y."/>
            <person name="Bolotin-Fukuhara M."/>
            <person name="Thierry A."/>
            <person name="Bouchier C."/>
            <person name="Caudron B."/>
            <person name="Scarpelli C."/>
            <person name="Gaillardin C."/>
            <person name="Weissenbach J."/>
            <person name="Wincker P."/>
            <person name="Souciet J.-L."/>
        </authorList>
    </citation>
    <scope>NUCLEOTIDE SEQUENCE [LARGE SCALE GENOMIC DNA]</scope>
    <source>
        <strain>ATCC 36239 / CBS 767 / BCRC 21394 / JCM 1990 / NBRC 0083 / IGC 2968</strain>
    </source>
</reference>
<gene>
    <name type="primary">ALG14</name>
    <name type="ordered locus">DEHA2F06512g</name>
</gene>